<name>RPO13_SULAC</name>
<reference key="1">
    <citation type="journal article" date="2005" name="J. Bacteriol.">
        <title>The genome of Sulfolobus acidocaldarius, a model organism of the Crenarchaeota.</title>
        <authorList>
            <person name="Chen L."/>
            <person name="Bruegger K."/>
            <person name="Skovgaard M."/>
            <person name="Redder P."/>
            <person name="She Q."/>
            <person name="Torarinsson E."/>
            <person name="Greve B."/>
            <person name="Awayez M."/>
            <person name="Zibat A."/>
            <person name="Klenk H.-P."/>
            <person name="Garrett R.A."/>
        </authorList>
    </citation>
    <scope>NUCLEOTIDE SEQUENCE [LARGE SCALE GENOMIC DNA]</scope>
    <source>
        <strain>ATCC 33909 / DSM 639 / JCM 8929 / NBRC 15157 / NCIMB 11770</strain>
    </source>
</reference>
<reference key="2">
    <citation type="journal article" date="1994" name="Syst. Appl. Microbiol.">
        <title>Structure and Function of the DNA-Dependent RNA Polymerase of Sulfolobus.</title>
        <authorList>
            <person name="Lanzendorfer M."/>
            <person name="Langer D."/>
            <person name="Hain J."/>
            <person name="Klenk H.-P."/>
            <person name="Holz I."/>
            <person name="Arnold-Ammer I."/>
            <person name="Zillig W."/>
        </authorList>
    </citation>
    <scope>NUCLEOTIDE SEQUENCE [GENOMIC DNA]</scope>
    <scope>FUNCTION</scope>
    <scope>CATALYTIC ACTIVITY</scope>
    <scope>SUBUNIT</scope>
    <source>
        <strain>ATCC 33909 / DSM 639 / JCM 8929 / NBRC 15157 / NCIMB 11770</strain>
    </source>
</reference>
<reference key="3">
    <citation type="journal article" date="1992" name="Proc. Natl. Acad. Sci. U.S.A.">
        <title>Component H of the DNA-dependent RNA polymerases of Archaea is homologous to a subunit shared by the three eucaryal nuclear RNA polymerases.</title>
        <authorList>
            <person name="Klenk H.-P."/>
            <person name="Palm P."/>
            <person name="Lottspeich F."/>
            <person name="Zillig W."/>
        </authorList>
    </citation>
    <scope>SUBUNIT</scope>
    <source>
        <strain>ATCC 33909 / DSM 639 / JCM 8929 / NBRC 15157 / NCIMB 11770</strain>
    </source>
</reference>
<reference key="4">
    <citation type="journal article" date="2012" name="Nucleic Acids Res.">
        <title>Structural and functional analyses of the interaction of archaeal RNA polymerase with DNA.</title>
        <authorList>
            <person name="Wojtas M.N."/>
            <person name="Mogni M."/>
            <person name="Millet O."/>
            <person name="Bell S.D."/>
            <person name="Abrescia N.G."/>
        </authorList>
    </citation>
    <scope>DNA-BINDING</scope>
    <source>
        <strain>ATCC 33909 / DSM 639 / JCM 8929 / NBRC 15157 / NCIMB 11770</strain>
    </source>
</reference>
<reference evidence="10 11 12" key="5">
    <citation type="journal article" date="2021" name="Nat. Commun.">
        <title>Structural basis of RNA polymerase inhibition by viral and host factors.</title>
        <authorList>
            <person name="Pilotto S."/>
            <person name="Fouqueau T."/>
            <person name="Lukoyanova N."/>
            <person name="Sheppard C."/>
            <person name="Lucas-Staat S."/>
            <person name="Diaz-Santin L.M."/>
            <person name="Matelska D."/>
            <person name="Prangishvili D."/>
            <person name="Cheung A.C.M."/>
            <person name="Werner F."/>
        </authorList>
    </citation>
    <scope>STRUCTURE BY ELECTRON MICROSCOPY (2.61 ANGSTROMS) OF RNAP WITH AND WITHOUT INHIBITORS</scope>
    <scope>SUBUNIT</scope>
    <source>
        <strain>ATCC 33909 / DSM 639 / JCM 8929 / NBRC 15157 / NCIMB 11770</strain>
    </source>
</reference>
<gene>
    <name evidence="8" type="primary">rpo13</name>
    <name evidence="9" type="ordered locus">Saci_0816</name>
</gene>
<comment type="function">
    <text evidence="4 6">DNA-dependent RNA polymerase catalyzes the transcription of DNA into RNA using the four ribonucleoside triphosphates as substrates (Ref.2). In vitro binds dsDNA but not ssDNA (PubMed:22848102).</text>
</comment>
<comment type="catalytic activity">
    <reaction evidence="6">
        <text>RNA(n) + a ribonucleoside 5'-triphosphate = RNA(n+1) + diphosphate</text>
        <dbReference type="Rhea" id="RHEA:21248"/>
        <dbReference type="Rhea" id="RHEA-COMP:14527"/>
        <dbReference type="Rhea" id="RHEA-COMP:17342"/>
        <dbReference type="ChEBI" id="CHEBI:33019"/>
        <dbReference type="ChEBI" id="CHEBI:61557"/>
        <dbReference type="ChEBI" id="CHEBI:140395"/>
        <dbReference type="EC" id="2.7.7.6"/>
    </reaction>
</comment>
<comment type="subunit">
    <text evidence="3 5 6 10 11 12">Part of the 13-subunit RNA polymerase.</text>
</comment>
<comment type="subcellular location">
    <subcellularLocation>
        <location evidence="1">Cytoplasm</location>
    </subcellularLocation>
</comment>
<comment type="similarity">
    <text evidence="8">Belongs to the archaeal Rpo13 RNA polymerase subunit family.</text>
</comment>
<keyword id="KW-0002">3D-structure</keyword>
<keyword id="KW-0963">Cytoplasm</keyword>
<keyword id="KW-0238">DNA-binding</keyword>
<keyword id="KW-0240">DNA-directed RNA polymerase</keyword>
<keyword id="KW-0548">Nucleotidyltransferase</keyword>
<keyword id="KW-1185">Reference proteome</keyword>
<keyword id="KW-0804">Transcription</keyword>
<keyword id="KW-0808">Transferase</keyword>
<evidence type="ECO:0000250" key="1">
    <source>
        <dbReference type="UniProtKB" id="B8YB65"/>
    </source>
</evidence>
<evidence type="ECO:0000256" key="2">
    <source>
        <dbReference type="SAM" id="MobiDB-lite"/>
    </source>
</evidence>
<evidence type="ECO:0000269" key="3">
    <source>
    </source>
</evidence>
<evidence type="ECO:0000269" key="4">
    <source>
    </source>
</evidence>
<evidence type="ECO:0000269" key="5">
    <source>
    </source>
</evidence>
<evidence type="ECO:0000269" key="6">
    <source ref="2"/>
</evidence>
<evidence type="ECO:0000303" key="7">
    <source ref="2"/>
</evidence>
<evidence type="ECO:0000305" key="8"/>
<evidence type="ECO:0000312" key="9">
    <source>
        <dbReference type="EMBL" id="AAY80183.1"/>
    </source>
</evidence>
<evidence type="ECO:0000312" key="10">
    <source>
        <dbReference type="PDB" id="7OK0"/>
    </source>
</evidence>
<evidence type="ECO:0000312" key="11">
    <source>
        <dbReference type="PDB" id="7OQ4"/>
    </source>
</evidence>
<evidence type="ECO:0000312" key="12">
    <source>
        <dbReference type="PDB" id="7OQY"/>
    </source>
</evidence>
<evidence type="ECO:0007829" key="13">
    <source>
        <dbReference type="PDB" id="7OQY"/>
    </source>
</evidence>
<organism>
    <name type="scientific">Sulfolobus acidocaldarius (strain ATCC 33909 / DSM 639 / JCM 8929 / NBRC 15157 / NCIMB 11770)</name>
    <dbReference type="NCBI Taxonomy" id="330779"/>
    <lineage>
        <taxon>Archaea</taxon>
        <taxon>Thermoproteota</taxon>
        <taxon>Thermoprotei</taxon>
        <taxon>Sulfolobales</taxon>
        <taxon>Sulfolobaceae</taxon>
        <taxon>Sulfolobus</taxon>
    </lineage>
</organism>
<dbReference type="EC" id="2.7.7.6" evidence="6"/>
<dbReference type="EMBL" id="CP000077">
    <property type="protein sequence ID" value="AAY80183.1"/>
    <property type="molecule type" value="Genomic_DNA"/>
</dbReference>
<dbReference type="RefSeq" id="WP_011277685.1">
    <property type="nucleotide sequence ID" value="NC_007181.1"/>
</dbReference>
<dbReference type="PDB" id="7OK0">
    <property type="method" value="EM"/>
    <property type="resolution" value="2.90 A"/>
    <property type="chains" value="Q=1-105"/>
</dbReference>
<dbReference type="PDB" id="7OQ4">
    <property type="method" value="EM"/>
    <property type="resolution" value="3.27 A"/>
    <property type="chains" value="Q=1-105"/>
</dbReference>
<dbReference type="PDB" id="7OQY">
    <property type="method" value="EM"/>
    <property type="resolution" value="2.61 A"/>
    <property type="chains" value="Q=1-105"/>
</dbReference>
<dbReference type="PDBsum" id="7OK0"/>
<dbReference type="PDBsum" id="7OQ4"/>
<dbReference type="PDBsum" id="7OQY"/>
<dbReference type="EMDB" id="EMD-12960"/>
<dbReference type="EMDB" id="EMD-13026"/>
<dbReference type="EMDB" id="EMD-13034"/>
<dbReference type="SMR" id="Q4JAJ6"/>
<dbReference type="STRING" id="330779.Saci_0816"/>
<dbReference type="GeneID" id="14551329"/>
<dbReference type="KEGG" id="sai:Saci_0816"/>
<dbReference type="PATRIC" id="fig|330779.12.peg.780"/>
<dbReference type="eggNOG" id="arCOG05938">
    <property type="taxonomic scope" value="Archaea"/>
</dbReference>
<dbReference type="HOGENOM" id="CLU_177471_0_0_2"/>
<dbReference type="Proteomes" id="UP000001018">
    <property type="component" value="Chromosome"/>
</dbReference>
<dbReference type="GO" id="GO:0005737">
    <property type="term" value="C:cytoplasm"/>
    <property type="evidence" value="ECO:0007669"/>
    <property type="project" value="UniProtKB-SubCell"/>
</dbReference>
<dbReference type="GO" id="GO:0000428">
    <property type="term" value="C:DNA-directed RNA polymerase complex"/>
    <property type="evidence" value="ECO:0000314"/>
    <property type="project" value="UniProtKB"/>
</dbReference>
<dbReference type="GO" id="GO:0003677">
    <property type="term" value="F:DNA binding"/>
    <property type="evidence" value="ECO:0007669"/>
    <property type="project" value="UniProtKB-KW"/>
</dbReference>
<dbReference type="GO" id="GO:0003899">
    <property type="term" value="F:DNA-directed RNA polymerase activity"/>
    <property type="evidence" value="ECO:0000314"/>
    <property type="project" value="UniProtKB"/>
</dbReference>
<dbReference type="GO" id="GO:0006351">
    <property type="term" value="P:DNA-templated transcription"/>
    <property type="evidence" value="ECO:0000314"/>
    <property type="project" value="UniProtKB"/>
</dbReference>
<dbReference type="Gene3D" id="6.20.450.10">
    <property type="match status" value="1"/>
</dbReference>
<dbReference type="InterPro" id="IPR021985">
    <property type="entry name" value="RNA_pol_Rpo13"/>
</dbReference>
<dbReference type="Pfam" id="PF12136">
    <property type="entry name" value="RNA_pol_Rpo13"/>
    <property type="match status" value="1"/>
</dbReference>
<proteinExistence type="evidence at protein level"/>
<sequence>MSEDDSKKEPEPEETEAEIKHEEISREEDDEGGEFSTVTISDIEMLLKDTEIWDKLLRNELSIEEAKKMFDDVARSYSKADKKKRRVEKKPKKGKVTKKSDEEEE</sequence>
<protein>
    <recommendedName>
        <fullName evidence="8">DNA-directed RNA polymerase subunit Rpo13</fullName>
        <ecNumber evidence="6">2.7.7.6</ecNumber>
    </recommendedName>
    <alternativeName>
        <fullName evidence="7">DNA-directed RNA polymerase subunit F</fullName>
    </alternativeName>
</protein>
<feature type="chain" id="PRO_0000453721" description="DNA-directed RNA polymerase subunit Rpo13">
    <location>
        <begin position="1"/>
        <end position="105"/>
    </location>
</feature>
<feature type="region of interest" description="Disordered" evidence="2">
    <location>
        <begin position="1"/>
        <end position="35"/>
    </location>
</feature>
<feature type="region of interest" description="Disordered" evidence="2">
    <location>
        <begin position="70"/>
        <end position="105"/>
    </location>
</feature>
<feature type="compositionally biased region" description="Basic and acidic residues" evidence="2">
    <location>
        <begin position="1"/>
        <end position="10"/>
    </location>
</feature>
<feature type="compositionally biased region" description="Basic and acidic residues" evidence="2">
    <location>
        <begin position="70"/>
        <end position="80"/>
    </location>
</feature>
<feature type="compositionally biased region" description="Basic residues" evidence="2">
    <location>
        <begin position="81"/>
        <end position="97"/>
    </location>
</feature>
<feature type="helix" evidence="13">
    <location>
        <begin position="38"/>
        <end position="57"/>
    </location>
</feature>
<feature type="helix" evidence="13">
    <location>
        <begin position="63"/>
        <end position="76"/>
    </location>
</feature>
<accession>Q4JAJ6</accession>